<dbReference type="EMBL" id="AL132970">
    <property type="protein sequence ID" value="CAB82704.1"/>
    <property type="status" value="ALT_SEQ"/>
    <property type="molecule type" value="Genomic_DNA"/>
</dbReference>
<dbReference type="EMBL" id="CP002686">
    <property type="protein sequence ID" value="AEE79339.1"/>
    <property type="molecule type" value="Genomic_DNA"/>
</dbReference>
<dbReference type="EMBL" id="BX819631">
    <property type="status" value="NOT_ANNOTATED_CDS"/>
    <property type="molecule type" value="mRNA"/>
</dbReference>
<dbReference type="PIR" id="T47648">
    <property type="entry name" value="T47648"/>
</dbReference>
<dbReference type="RefSeq" id="NP_191069.2">
    <property type="nucleotide sequence ID" value="NM_115367.3"/>
</dbReference>
<dbReference type="PDB" id="8WTM">
    <property type="method" value="EM"/>
    <property type="resolution" value="2.65 A"/>
    <property type="chains" value="A/B=1-736"/>
</dbReference>
<dbReference type="PDB" id="8WTN">
    <property type="method" value="EM"/>
    <property type="resolution" value="2.95 A"/>
    <property type="chains" value="A/B=1-736"/>
</dbReference>
<dbReference type="PDB" id="8WTO">
    <property type="method" value="EM"/>
    <property type="resolution" value="2.38 A"/>
    <property type="chains" value="A/B=1-736"/>
</dbReference>
<dbReference type="PDB" id="8WTP">
    <property type="method" value="EM"/>
    <property type="resolution" value="2.82 A"/>
    <property type="chains" value="A/B=1-736"/>
</dbReference>
<dbReference type="PDBsum" id="8WTM"/>
<dbReference type="PDBsum" id="8WTN"/>
<dbReference type="PDBsum" id="8WTO"/>
<dbReference type="PDBsum" id="8WTP"/>
<dbReference type="EMDB" id="EMD-37836"/>
<dbReference type="EMDB" id="EMD-37837"/>
<dbReference type="EMDB" id="EMD-37838"/>
<dbReference type="EMDB" id="EMD-37839"/>
<dbReference type="EMDB" id="EMD-37840"/>
<dbReference type="SMR" id="Q9M2V7"/>
<dbReference type="BioGRID" id="9991">
    <property type="interactions" value="46"/>
</dbReference>
<dbReference type="FunCoup" id="Q9M2V7">
    <property type="interactions" value="66"/>
</dbReference>
<dbReference type="IntAct" id="Q9M2V7">
    <property type="interactions" value="45"/>
</dbReference>
<dbReference type="STRING" id="3702.Q9M2V7"/>
<dbReference type="TCDB" id="3.A.1.204.30">
    <property type="family name" value="the atp-binding cassette (abc) superfamily"/>
</dbReference>
<dbReference type="PaxDb" id="3702-AT3G55090.1"/>
<dbReference type="ProteomicsDB" id="244336"/>
<dbReference type="EnsemblPlants" id="AT3G55090.1">
    <property type="protein sequence ID" value="AT3G55090.1"/>
    <property type="gene ID" value="AT3G55090"/>
</dbReference>
<dbReference type="GeneID" id="824675"/>
<dbReference type="Gramene" id="AT3G55090.1">
    <property type="protein sequence ID" value="AT3G55090.1"/>
    <property type="gene ID" value="AT3G55090"/>
</dbReference>
<dbReference type="KEGG" id="ath:AT3G55090"/>
<dbReference type="Araport" id="AT3G55090"/>
<dbReference type="TAIR" id="AT3G55090">
    <property type="gene designation" value="ABCG16"/>
</dbReference>
<dbReference type="eggNOG" id="KOG0061">
    <property type="taxonomic scope" value="Eukaryota"/>
</dbReference>
<dbReference type="HOGENOM" id="CLU_000604_57_8_1"/>
<dbReference type="InParanoid" id="Q9M2V7"/>
<dbReference type="OMA" id="TIHQPGM"/>
<dbReference type="PhylomeDB" id="Q9M2V7"/>
<dbReference type="PRO" id="PR:Q9M2V7"/>
<dbReference type="Proteomes" id="UP000006548">
    <property type="component" value="Chromosome 3"/>
</dbReference>
<dbReference type="ExpressionAtlas" id="Q9M2V7">
    <property type="expression patterns" value="baseline and differential"/>
</dbReference>
<dbReference type="GO" id="GO:0016020">
    <property type="term" value="C:membrane"/>
    <property type="evidence" value="ECO:0007669"/>
    <property type="project" value="UniProtKB-SubCell"/>
</dbReference>
<dbReference type="GO" id="GO:0140359">
    <property type="term" value="F:ABC-type transporter activity"/>
    <property type="evidence" value="ECO:0007669"/>
    <property type="project" value="InterPro"/>
</dbReference>
<dbReference type="GO" id="GO:0005524">
    <property type="term" value="F:ATP binding"/>
    <property type="evidence" value="ECO:0007669"/>
    <property type="project" value="UniProtKB-KW"/>
</dbReference>
<dbReference type="GO" id="GO:0016887">
    <property type="term" value="F:ATP hydrolysis activity"/>
    <property type="evidence" value="ECO:0007669"/>
    <property type="project" value="InterPro"/>
</dbReference>
<dbReference type="GO" id="GO:0010208">
    <property type="term" value="P:pollen wall assembly"/>
    <property type="evidence" value="ECO:0000316"/>
    <property type="project" value="TAIR"/>
</dbReference>
<dbReference type="FunFam" id="3.40.50.300:FF:000530">
    <property type="entry name" value="ABC transporter G family member 6"/>
    <property type="match status" value="1"/>
</dbReference>
<dbReference type="Gene3D" id="3.40.50.300">
    <property type="entry name" value="P-loop containing nucleotide triphosphate hydrolases"/>
    <property type="match status" value="1"/>
</dbReference>
<dbReference type="InterPro" id="IPR003593">
    <property type="entry name" value="AAA+_ATPase"/>
</dbReference>
<dbReference type="InterPro" id="IPR013525">
    <property type="entry name" value="ABC2_TM"/>
</dbReference>
<dbReference type="InterPro" id="IPR003439">
    <property type="entry name" value="ABC_transporter-like_ATP-bd"/>
</dbReference>
<dbReference type="InterPro" id="IPR017871">
    <property type="entry name" value="ABC_transporter-like_CS"/>
</dbReference>
<dbReference type="InterPro" id="IPR050352">
    <property type="entry name" value="ABCG_transporters"/>
</dbReference>
<dbReference type="InterPro" id="IPR027417">
    <property type="entry name" value="P-loop_NTPase"/>
</dbReference>
<dbReference type="PANTHER" id="PTHR48041:SF11">
    <property type="entry name" value="ABC TRANSPORTER G FAMILY MEMBER 16"/>
    <property type="match status" value="1"/>
</dbReference>
<dbReference type="PANTHER" id="PTHR48041">
    <property type="entry name" value="ABC TRANSPORTER G FAMILY MEMBER 28"/>
    <property type="match status" value="1"/>
</dbReference>
<dbReference type="Pfam" id="PF01061">
    <property type="entry name" value="ABC2_membrane"/>
    <property type="match status" value="1"/>
</dbReference>
<dbReference type="Pfam" id="PF00005">
    <property type="entry name" value="ABC_tran"/>
    <property type="match status" value="1"/>
</dbReference>
<dbReference type="SMART" id="SM00382">
    <property type="entry name" value="AAA"/>
    <property type="match status" value="1"/>
</dbReference>
<dbReference type="SUPFAM" id="SSF52540">
    <property type="entry name" value="P-loop containing nucleoside triphosphate hydrolases"/>
    <property type="match status" value="1"/>
</dbReference>
<dbReference type="PROSITE" id="PS00211">
    <property type="entry name" value="ABC_TRANSPORTER_1"/>
    <property type="match status" value="1"/>
</dbReference>
<dbReference type="PROSITE" id="PS50893">
    <property type="entry name" value="ABC_TRANSPORTER_2"/>
    <property type="match status" value="1"/>
</dbReference>
<sequence>MSRILVEDDNATPFHSMEIISSSLTLGQLLKNVSDVRKVEVGDETPVHEFFDRDGSSLDGDNDHLMRPVPFVLSFNNLTYNVSVRRKLDFHDLVPWRRTSFSKTKTLLDNISGETRDGEILAVLGASGSGKSTLIDALANRIAKGSLKGTVTLNGEALQSRMLKVISAYVMQDDLLFPMLTVEETLMFAAEFRLPRSLPKSKKKLRVQALIDQLGIRNAAKTIIGDEGHRGISGGERRRVSIGIDIIHDPIVLFLDEPTSGLDSTSAFMVVKVLKRIAESGSIIIMSIHQPSHRVLSLLDRLIFLSRGHTVFSGSPASLPSFFAGFGNPIPENENQTEFALDLIRELEGSAGGTRGLVEFNKKWQEMKKQSNPQTLTPPASPNPNLTLKEAISASISRGKLVSGGGGGSSVINHGGGTLAVPAFANPFWIEIKTLTRRSILNSRRQPELLGMRLATVIVTGFILATVFWRLDNSPKGVQERLGFFAFAMSTMFYTCADALPVFLQERYIFMRETAYNAYRRSSYVLSHAIVTFPSLIFLSLAFAVTTFWAVGLEGGLMGFLFYCLIILASFWSGSSFVTFLSGVVPHVMLGYTIVVAILAYFLLFSGFFINRDRIPQYWIWFHYLSLVKYPYEAVLQNEFSDPTECFVRGVQLFDNSPLGELTYGMKLRLLDSVSRSIGMRISSSTCLTTGADVLKQQGVTQLSKWNCLLITVGFGFLFRILFYLCLLLGSKNKRR</sequence>
<feature type="chain" id="PRO_0000240688" description="ABC transporter G family member 16">
    <location>
        <begin position="1"/>
        <end position="736"/>
    </location>
</feature>
<feature type="transmembrane region" description="Helical" evidence="2">
    <location>
        <begin position="410"/>
        <end position="430"/>
    </location>
</feature>
<feature type="transmembrane region" description="Helical" evidence="2">
    <location>
        <begin position="449"/>
        <end position="469"/>
    </location>
</feature>
<feature type="transmembrane region" description="Helical" evidence="2">
    <location>
        <begin position="484"/>
        <end position="504"/>
    </location>
</feature>
<feature type="transmembrane region" description="Helical" evidence="2">
    <location>
        <begin position="525"/>
        <end position="545"/>
    </location>
</feature>
<feature type="transmembrane region" description="Helical" evidence="2">
    <location>
        <begin position="569"/>
        <end position="589"/>
    </location>
</feature>
<feature type="transmembrane region" description="Helical" evidence="2">
    <location>
        <begin position="590"/>
        <end position="610"/>
    </location>
</feature>
<feature type="transmembrane region" description="Helical" evidence="2">
    <location>
        <begin position="709"/>
        <end position="729"/>
    </location>
</feature>
<feature type="domain" description="ABC transporter" evidence="3">
    <location>
        <begin position="88"/>
        <end position="332"/>
    </location>
</feature>
<feature type="domain" description="ABC transmembrane type-2">
    <location>
        <begin position="430"/>
        <end position="640"/>
    </location>
</feature>
<feature type="binding site" evidence="3">
    <location>
        <begin position="125"/>
        <end position="132"/>
    </location>
    <ligand>
        <name>ATP</name>
        <dbReference type="ChEBI" id="CHEBI:30616"/>
    </ligand>
</feature>
<feature type="strand" evidence="7">
    <location>
        <begin position="72"/>
        <end position="84"/>
    </location>
</feature>
<feature type="strand" evidence="7">
    <location>
        <begin position="103"/>
        <end position="116"/>
    </location>
</feature>
<feature type="strand" evidence="7">
    <location>
        <begin position="120"/>
        <end position="125"/>
    </location>
</feature>
<feature type="strand" evidence="5">
    <location>
        <begin position="127"/>
        <end position="130"/>
    </location>
</feature>
<feature type="helix" evidence="7">
    <location>
        <begin position="131"/>
        <end position="138"/>
    </location>
</feature>
<feature type="strand" evidence="7">
    <location>
        <begin position="147"/>
        <end position="153"/>
    </location>
</feature>
<feature type="turn" evidence="5">
    <location>
        <begin position="154"/>
        <end position="156"/>
    </location>
</feature>
<feature type="helix" evidence="7">
    <location>
        <begin position="160"/>
        <end position="166"/>
    </location>
</feature>
<feature type="strand" evidence="7">
    <location>
        <begin position="167"/>
        <end position="170"/>
    </location>
</feature>
<feature type="strand" evidence="8">
    <location>
        <begin position="178"/>
        <end position="180"/>
    </location>
</feature>
<feature type="helix" evidence="7">
    <location>
        <begin position="182"/>
        <end position="193"/>
    </location>
</feature>
<feature type="helix" evidence="7">
    <location>
        <begin position="200"/>
        <end position="214"/>
    </location>
</feature>
<feature type="turn" evidence="7">
    <location>
        <begin position="218"/>
        <end position="221"/>
    </location>
</feature>
<feature type="strand" evidence="7">
    <location>
        <begin position="227"/>
        <end position="229"/>
    </location>
</feature>
<feature type="helix" evidence="7">
    <location>
        <begin position="234"/>
        <end position="246"/>
    </location>
</feature>
<feature type="strand" evidence="7">
    <location>
        <begin position="251"/>
        <end position="257"/>
    </location>
</feature>
<feature type="turn" evidence="7">
    <location>
        <begin position="258"/>
        <end position="261"/>
    </location>
</feature>
<feature type="helix" evidence="7">
    <location>
        <begin position="264"/>
        <end position="279"/>
    </location>
</feature>
<feature type="strand" evidence="7">
    <location>
        <begin position="283"/>
        <end position="287"/>
    </location>
</feature>
<feature type="helix" evidence="7">
    <location>
        <begin position="293"/>
        <end position="296"/>
    </location>
</feature>
<feature type="strand" evidence="7">
    <location>
        <begin position="301"/>
        <end position="306"/>
    </location>
</feature>
<feature type="strand" evidence="7">
    <location>
        <begin position="309"/>
        <end position="314"/>
    </location>
</feature>
<feature type="helix" evidence="7">
    <location>
        <begin position="316"/>
        <end position="318"/>
    </location>
</feature>
<feature type="helix" evidence="7">
    <location>
        <begin position="319"/>
        <end position="326"/>
    </location>
</feature>
<feature type="strand" evidence="8">
    <location>
        <begin position="332"/>
        <end position="334"/>
    </location>
</feature>
<feature type="helix" evidence="7">
    <location>
        <begin position="336"/>
        <end position="348"/>
    </location>
</feature>
<feature type="strand" evidence="7">
    <location>
        <begin position="350"/>
        <end position="352"/>
    </location>
</feature>
<feature type="helix" evidence="7">
    <location>
        <begin position="355"/>
        <end position="367"/>
    </location>
</feature>
<feature type="helix" evidence="7">
    <location>
        <begin position="388"/>
        <end position="396"/>
    </location>
</feature>
<feature type="turn" evidence="7">
    <location>
        <begin position="397"/>
        <end position="399"/>
    </location>
</feature>
<feature type="strand" evidence="7">
    <location>
        <begin position="423"/>
        <end position="426"/>
    </location>
</feature>
<feature type="helix" evidence="7">
    <location>
        <begin position="428"/>
        <end position="444"/>
    </location>
</feature>
<feature type="helix" evidence="7">
    <location>
        <begin position="448"/>
        <end position="467"/>
    </location>
</feature>
<feature type="turn" evidence="7">
    <location>
        <begin position="468"/>
        <end position="470"/>
    </location>
</feature>
<feature type="helix" evidence="7">
    <location>
        <begin position="475"/>
        <end position="495"/>
    </location>
</feature>
<feature type="helix" evidence="7">
    <location>
        <begin position="496"/>
        <end position="499"/>
    </location>
</feature>
<feature type="helix" evidence="7">
    <location>
        <begin position="500"/>
        <end position="504"/>
    </location>
</feature>
<feature type="helix" evidence="7">
    <location>
        <begin position="507"/>
        <end position="514"/>
    </location>
</feature>
<feature type="turn" evidence="7">
    <location>
        <begin position="515"/>
        <end position="517"/>
    </location>
</feature>
<feature type="helix" evidence="7">
    <location>
        <begin position="521"/>
        <end position="531"/>
    </location>
</feature>
<feature type="helix" evidence="7">
    <location>
        <begin position="533"/>
        <end position="551"/>
    </location>
</feature>
<feature type="helix" evidence="7">
    <location>
        <begin position="556"/>
        <end position="582"/>
    </location>
</feature>
<feature type="helix" evidence="7">
    <location>
        <begin position="588"/>
        <end position="604"/>
    </location>
</feature>
<feature type="strand" evidence="7">
    <location>
        <begin position="606"/>
        <end position="610"/>
    </location>
</feature>
<feature type="turn" evidence="7">
    <location>
        <begin position="612"/>
        <end position="614"/>
    </location>
</feature>
<feature type="helix" evidence="7">
    <location>
        <begin position="617"/>
        <end position="619"/>
    </location>
</feature>
<feature type="helix" evidence="7">
    <location>
        <begin position="620"/>
        <end position="623"/>
    </location>
</feature>
<feature type="helix" evidence="7">
    <location>
        <begin position="629"/>
        <end position="639"/>
    </location>
</feature>
<feature type="strand" evidence="7">
    <location>
        <begin position="646"/>
        <end position="649"/>
    </location>
</feature>
<feature type="helix" evidence="7">
    <location>
        <begin position="652"/>
        <end position="654"/>
    </location>
</feature>
<feature type="strand" evidence="5">
    <location>
        <begin position="655"/>
        <end position="659"/>
    </location>
</feature>
<feature type="helix" evidence="7">
    <location>
        <begin position="664"/>
        <end position="678"/>
    </location>
</feature>
<feature type="strand" evidence="7">
    <location>
        <begin position="687"/>
        <end position="690"/>
    </location>
</feature>
<feature type="helix" evidence="7">
    <location>
        <begin position="691"/>
        <end position="698"/>
    </location>
</feature>
<feature type="turn" evidence="6">
    <location>
        <begin position="699"/>
        <end position="701"/>
    </location>
</feature>
<feature type="helix" evidence="7">
    <location>
        <begin position="705"/>
        <end position="729"/>
    </location>
</feature>
<gene>
    <name type="primary">ABCG16</name>
    <name type="synonym">WBC16</name>
    <name type="ordered locus">At3g55090</name>
    <name type="ORF">T15C9.80</name>
</gene>
<name>AB16G_ARATH</name>
<evidence type="ECO:0000250" key="1"/>
<evidence type="ECO:0000255" key="2"/>
<evidence type="ECO:0000255" key="3">
    <source>
        <dbReference type="PROSITE-ProRule" id="PRU00434"/>
    </source>
</evidence>
<evidence type="ECO:0000305" key="4"/>
<evidence type="ECO:0007829" key="5">
    <source>
        <dbReference type="PDB" id="8WTM"/>
    </source>
</evidence>
<evidence type="ECO:0007829" key="6">
    <source>
        <dbReference type="PDB" id="8WTN"/>
    </source>
</evidence>
<evidence type="ECO:0007829" key="7">
    <source>
        <dbReference type="PDB" id="8WTO"/>
    </source>
</evidence>
<evidence type="ECO:0007829" key="8">
    <source>
        <dbReference type="PDB" id="8WTP"/>
    </source>
</evidence>
<reference key="1">
    <citation type="journal article" date="2000" name="Nature">
        <title>Sequence and analysis of chromosome 3 of the plant Arabidopsis thaliana.</title>
        <authorList>
            <person name="Salanoubat M."/>
            <person name="Lemcke K."/>
            <person name="Rieger M."/>
            <person name="Ansorge W."/>
            <person name="Unseld M."/>
            <person name="Fartmann B."/>
            <person name="Valle G."/>
            <person name="Bloecker H."/>
            <person name="Perez-Alonso M."/>
            <person name="Obermaier B."/>
            <person name="Delseny M."/>
            <person name="Boutry M."/>
            <person name="Grivell L.A."/>
            <person name="Mache R."/>
            <person name="Puigdomenech P."/>
            <person name="De Simone V."/>
            <person name="Choisne N."/>
            <person name="Artiguenave F."/>
            <person name="Robert C."/>
            <person name="Brottier P."/>
            <person name="Wincker P."/>
            <person name="Cattolico L."/>
            <person name="Weissenbach J."/>
            <person name="Saurin W."/>
            <person name="Quetier F."/>
            <person name="Schaefer M."/>
            <person name="Mueller-Auer S."/>
            <person name="Gabel C."/>
            <person name="Fuchs M."/>
            <person name="Benes V."/>
            <person name="Wurmbach E."/>
            <person name="Drzonek H."/>
            <person name="Erfle H."/>
            <person name="Jordan N."/>
            <person name="Bangert S."/>
            <person name="Wiedelmann R."/>
            <person name="Kranz H."/>
            <person name="Voss H."/>
            <person name="Holland R."/>
            <person name="Brandt P."/>
            <person name="Nyakatura G."/>
            <person name="Vezzi A."/>
            <person name="D'Angelo M."/>
            <person name="Pallavicini A."/>
            <person name="Toppo S."/>
            <person name="Simionati B."/>
            <person name="Conrad A."/>
            <person name="Hornischer K."/>
            <person name="Kauer G."/>
            <person name="Loehnert T.-H."/>
            <person name="Nordsiek G."/>
            <person name="Reichelt J."/>
            <person name="Scharfe M."/>
            <person name="Schoen O."/>
            <person name="Bargues M."/>
            <person name="Terol J."/>
            <person name="Climent J."/>
            <person name="Navarro P."/>
            <person name="Collado C."/>
            <person name="Perez-Perez A."/>
            <person name="Ottenwaelder B."/>
            <person name="Duchemin D."/>
            <person name="Cooke R."/>
            <person name="Laudie M."/>
            <person name="Berger-Llauro C."/>
            <person name="Purnelle B."/>
            <person name="Masuy D."/>
            <person name="de Haan M."/>
            <person name="Maarse A.C."/>
            <person name="Alcaraz J.-P."/>
            <person name="Cottet A."/>
            <person name="Casacuberta E."/>
            <person name="Monfort A."/>
            <person name="Argiriou A."/>
            <person name="Flores M."/>
            <person name="Liguori R."/>
            <person name="Vitale D."/>
            <person name="Mannhaupt G."/>
            <person name="Haase D."/>
            <person name="Schoof H."/>
            <person name="Rudd S."/>
            <person name="Zaccaria P."/>
            <person name="Mewes H.-W."/>
            <person name="Mayer K.F.X."/>
            <person name="Kaul S."/>
            <person name="Town C.D."/>
            <person name="Koo H.L."/>
            <person name="Tallon L.J."/>
            <person name="Jenkins J."/>
            <person name="Rooney T."/>
            <person name="Rizzo M."/>
            <person name="Walts A."/>
            <person name="Utterback T."/>
            <person name="Fujii C.Y."/>
            <person name="Shea T.P."/>
            <person name="Creasy T.H."/>
            <person name="Haas B."/>
            <person name="Maiti R."/>
            <person name="Wu D."/>
            <person name="Peterson J."/>
            <person name="Van Aken S."/>
            <person name="Pai G."/>
            <person name="Militscher J."/>
            <person name="Sellers P."/>
            <person name="Gill J.E."/>
            <person name="Feldblyum T.V."/>
            <person name="Preuss D."/>
            <person name="Lin X."/>
            <person name="Nierman W.C."/>
            <person name="Salzberg S.L."/>
            <person name="White O."/>
            <person name="Venter J.C."/>
            <person name="Fraser C.M."/>
            <person name="Kaneko T."/>
            <person name="Nakamura Y."/>
            <person name="Sato S."/>
            <person name="Kato T."/>
            <person name="Asamizu E."/>
            <person name="Sasamoto S."/>
            <person name="Kimura T."/>
            <person name="Idesawa K."/>
            <person name="Kawashima K."/>
            <person name="Kishida Y."/>
            <person name="Kiyokawa C."/>
            <person name="Kohara M."/>
            <person name="Matsumoto M."/>
            <person name="Matsuno A."/>
            <person name="Muraki A."/>
            <person name="Nakayama S."/>
            <person name="Nakazaki N."/>
            <person name="Shinpo S."/>
            <person name="Takeuchi C."/>
            <person name="Wada T."/>
            <person name="Watanabe A."/>
            <person name="Yamada M."/>
            <person name="Yasuda M."/>
            <person name="Tabata S."/>
        </authorList>
    </citation>
    <scope>NUCLEOTIDE SEQUENCE [LARGE SCALE GENOMIC DNA]</scope>
    <source>
        <strain>cv. Columbia</strain>
    </source>
</reference>
<reference key="2">
    <citation type="journal article" date="2017" name="Plant J.">
        <title>Araport11: a complete reannotation of the Arabidopsis thaliana reference genome.</title>
        <authorList>
            <person name="Cheng C.Y."/>
            <person name="Krishnakumar V."/>
            <person name="Chan A.P."/>
            <person name="Thibaud-Nissen F."/>
            <person name="Schobel S."/>
            <person name="Town C.D."/>
        </authorList>
    </citation>
    <scope>GENOME REANNOTATION</scope>
    <source>
        <strain>cv. Columbia</strain>
    </source>
</reference>
<reference key="3">
    <citation type="journal article" date="2004" name="Genome Res.">
        <title>Whole genome sequence comparisons and 'full-length' cDNA sequences: a combined approach to evaluate and improve Arabidopsis genome annotation.</title>
        <authorList>
            <person name="Castelli V."/>
            <person name="Aury J.-M."/>
            <person name="Jaillon O."/>
            <person name="Wincker P."/>
            <person name="Clepet C."/>
            <person name="Menard M."/>
            <person name="Cruaud C."/>
            <person name="Quetier F."/>
            <person name="Scarpelli C."/>
            <person name="Schaechter V."/>
            <person name="Temple G."/>
            <person name="Caboche M."/>
            <person name="Weissenbach J."/>
            <person name="Salanoubat M."/>
        </authorList>
    </citation>
    <scope>NUCLEOTIDE SEQUENCE [LARGE SCALE MRNA] OF 1-527</scope>
    <source>
        <strain>cv. Columbia</strain>
    </source>
</reference>
<reference key="4">
    <citation type="journal article" date="2001" name="J. Biol. Chem.">
        <title>The Arabidopsis thaliana ABC protein superfamily, a complete inventory.</title>
        <authorList>
            <person name="Sanchez-Fernandez R."/>
            <person name="Davies T.G."/>
            <person name="Coleman J.O."/>
            <person name="Rea P.A."/>
        </authorList>
    </citation>
    <scope>GENE FAMILY</scope>
    <scope>NOMENCLATURE</scope>
</reference>
<reference key="5">
    <citation type="journal article" date="2008" name="Trends Plant Sci.">
        <title>Plant ABC proteins - a unified nomenclature and updated inventory.</title>
        <authorList>
            <person name="Verrier P.J."/>
            <person name="Bird D."/>
            <person name="Burla B."/>
            <person name="Dassa E."/>
            <person name="Forestier C."/>
            <person name="Geisler M."/>
            <person name="Klein M."/>
            <person name="Kolukisaoglu H.U."/>
            <person name="Lee Y."/>
            <person name="Martinoia E."/>
            <person name="Murphy A."/>
            <person name="Rea P.A."/>
            <person name="Samuels L."/>
            <person name="Schulz B."/>
            <person name="Spalding E.J."/>
            <person name="Yazaki K."/>
            <person name="Theodoulou F.L."/>
        </authorList>
    </citation>
    <scope>GENE FAMILY</scope>
    <scope>NOMENCLATURE</scope>
</reference>
<comment type="subcellular location">
    <subcellularLocation>
        <location evidence="1">Membrane</location>
        <topology evidence="1">Multi-pass membrane protein</topology>
    </subcellularLocation>
</comment>
<comment type="similarity">
    <text evidence="4">Belongs to the ABC transporter superfamily. ABCG family. Eye pigment precursor importer (TC 3.A.1.204) subfamily.</text>
</comment>
<comment type="sequence caution" evidence="4">
    <conflict type="erroneous gene model prediction">
        <sequence resource="EMBL-CDS" id="CAB82704"/>
    </conflict>
</comment>
<proteinExistence type="evidence at protein level"/>
<keyword id="KW-0002">3D-structure</keyword>
<keyword id="KW-0067">ATP-binding</keyword>
<keyword id="KW-0472">Membrane</keyword>
<keyword id="KW-0547">Nucleotide-binding</keyword>
<keyword id="KW-1185">Reference proteome</keyword>
<keyword id="KW-0812">Transmembrane</keyword>
<keyword id="KW-1133">Transmembrane helix</keyword>
<keyword id="KW-0813">Transport</keyword>
<accession>Q9M2V7</accession>
<organism>
    <name type="scientific">Arabidopsis thaliana</name>
    <name type="common">Mouse-ear cress</name>
    <dbReference type="NCBI Taxonomy" id="3702"/>
    <lineage>
        <taxon>Eukaryota</taxon>
        <taxon>Viridiplantae</taxon>
        <taxon>Streptophyta</taxon>
        <taxon>Embryophyta</taxon>
        <taxon>Tracheophyta</taxon>
        <taxon>Spermatophyta</taxon>
        <taxon>Magnoliopsida</taxon>
        <taxon>eudicotyledons</taxon>
        <taxon>Gunneridae</taxon>
        <taxon>Pentapetalae</taxon>
        <taxon>rosids</taxon>
        <taxon>malvids</taxon>
        <taxon>Brassicales</taxon>
        <taxon>Brassicaceae</taxon>
        <taxon>Camelineae</taxon>
        <taxon>Arabidopsis</taxon>
    </lineage>
</organism>
<protein>
    <recommendedName>
        <fullName>ABC transporter G family member 16</fullName>
        <shortName>ABC transporter ABCG.16</shortName>
        <shortName>AtABCG16</shortName>
    </recommendedName>
    <alternativeName>
        <fullName>Probable white-brown complex homolog protein 16</fullName>
        <shortName>AtWBC16</shortName>
    </alternativeName>
</protein>